<reference key="1">
    <citation type="journal article" date="2003" name="Mol. Microbiol.">
        <title>An integrated analysis of the genome of the hyperthermophilic archaeon Pyrococcus abyssi.</title>
        <authorList>
            <person name="Cohen G.N."/>
            <person name="Barbe V."/>
            <person name="Flament D."/>
            <person name="Galperin M."/>
            <person name="Heilig R."/>
            <person name="Lecompte O."/>
            <person name="Poch O."/>
            <person name="Prieur D."/>
            <person name="Querellou J."/>
            <person name="Ripp R."/>
            <person name="Thierry J.-C."/>
            <person name="Van der Oost J."/>
            <person name="Weissenbach J."/>
            <person name="Zivanovic Y."/>
            <person name="Forterre P."/>
        </authorList>
    </citation>
    <scope>NUCLEOTIDE SEQUENCE [LARGE SCALE GENOMIC DNA]</scope>
    <source>
        <strain>GE5 / Orsay</strain>
    </source>
</reference>
<reference key="2">
    <citation type="journal article" date="2012" name="Curr. Microbiol.">
        <title>Re-annotation of two hyperthermophilic archaea Pyrococcus abyssi GE5 and Pyrococcus furiosus DSM 3638.</title>
        <authorList>
            <person name="Gao J."/>
            <person name="Wang J."/>
        </authorList>
    </citation>
    <scope>GENOME REANNOTATION</scope>
    <source>
        <strain>GE5 / Orsay</strain>
    </source>
</reference>
<proteinExistence type="inferred from homology"/>
<sequence>MASNKAMFTNDVPQDRLLAVEKIESLRKPAKVMIIGDVDTGKTTLTIYLANELLSRGFRVAIIDSDIGQKGILPPATISLAFVDSHFTSLDDLKAFSHYFIGTITPNQYFGEMVVGVMKLSELAMKFSDVVLIDTTGMIYGSGVELKRMKIEAVKPNLILALERNNELAPILKGYEDITIRLEVSEKAKDFSRSERRELRREKWRKYFENSKIVNFNLDDVLVTGTSLFQGEEIGDTEKSLLERLFKWLIIHGRKIGNKYFVVKVDASEGPRIVDKNVVKYFDFSKLSNILLGLIDKQGFCIGLGILKSINFKEKKIEVLTPVEDLSSVAEIRFGRVRVREDGEELGLLDREAL</sequence>
<name>PRNK_PYRAB</name>
<gene>
    <name type="ordered locus">PYRAB01840</name>
    <name type="ORF">PAB0124</name>
</gene>
<keyword id="KW-0067">ATP-binding</keyword>
<keyword id="KW-0418">Kinase</keyword>
<keyword id="KW-0547">Nucleotide-binding</keyword>
<keyword id="KW-0808">Transferase</keyword>
<feature type="chain" id="PRO_0000376015" description="Polyribonucleotide 5'-hydroxyl-kinase PYRAB01840">
    <location>
        <begin position="1"/>
        <end position="354"/>
    </location>
</feature>
<feature type="binding site" evidence="2">
    <location>
        <begin position="36"/>
        <end position="43"/>
    </location>
    <ligand>
        <name>ATP</name>
        <dbReference type="ChEBI" id="CHEBI:30616"/>
    </ligand>
</feature>
<protein>
    <recommendedName>
        <fullName>Polyribonucleotide 5'-hydroxyl-kinase PYRAB01840</fullName>
        <ecNumber>2.7.1.78</ecNumber>
    </recommendedName>
    <alternativeName>
        <fullName>Polynucleotide kinase PYRAB01840</fullName>
    </alternativeName>
</protein>
<comment type="function">
    <text evidence="1">Polynucleotide kinase that can phosphorylate the 5'-hydroxyl groups of both single-stranded RNA (ssRNA) and single-stranded DNA (ssDNA). Exhibits a strong preference for ssRNA (By similarity).</text>
</comment>
<comment type="catalytic activity">
    <reaction>
        <text>a 5'-end dephospho-2'-deoxyribonucleoside-DNA + ATP = a 5'-end 5'-phospho-2'-deoxyribonucleoside-DNA + ADP + H(+)</text>
        <dbReference type="Rhea" id="RHEA:15669"/>
        <dbReference type="Rhea" id="RHEA-COMP:13180"/>
        <dbReference type="Rhea" id="RHEA-COMP:13184"/>
        <dbReference type="ChEBI" id="CHEBI:15378"/>
        <dbReference type="ChEBI" id="CHEBI:30616"/>
        <dbReference type="ChEBI" id="CHEBI:136412"/>
        <dbReference type="ChEBI" id="CHEBI:136416"/>
        <dbReference type="ChEBI" id="CHEBI:456216"/>
        <dbReference type="EC" id="2.7.1.78"/>
    </reaction>
</comment>
<comment type="catalytic activity">
    <reaction>
        <text>a 5'-end dephospho-ribonucleoside-RNA + ATP = a 5'-end 5'-phospho-ribonucleoside-RNA + ADP + H(+)</text>
        <dbReference type="Rhea" id="RHEA:54580"/>
        <dbReference type="Rhea" id="RHEA-COMP:13936"/>
        <dbReference type="Rhea" id="RHEA-COMP:15179"/>
        <dbReference type="ChEBI" id="CHEBI:15378"/>
        <dbReference type="ChEBI" id="CHEBI:30616"/>
        <dbReference type="ChEBI" id="CHEBI:138282"/>
        <dbReference type="ChEBI" id="CHEBI:138284"/>
        <dbReference type="ChEBI" id="CHEBI:456216"/>
        <dbReference type="EC" id="2.7.1.78"/>
    </reaction>
</comment>
<comment type="cofactor">
    <cofactor evidence="1">
        <name>a divalent metal cation</name>
        <dbReference type="ChEBI" id="CHEBI:60240"/>
    </cofactor>
</comment>
<comment type="sequence caution" evidence="3">
    <conflict type="erroneous initiation">
        <sequence resource="EMBL-CDS" id="CAB49108"/>
    </conflict>
    <text>Extended N-terminus.</text>
</comment>
<evidence type="ECO:0000250" key="1"/>
<evidence type="ECO:0000255" key="2"/>
<evidence type="ECO:0000305" key="3"/>
<organism>
    <name type="scientific">Pyrococcus abyssi (strain GE5 / Orsay)</name>
    <dbReference type="NCBI Taxonomy" id="272844"/>
    <lineage>
        <taxon>Archaea</taxon>
        <taxon>Methanobacteriati</taxon>
        <taxon>Methanobacteriota</taxon>
        <taxon>Thermococci</taxon>
        <taxon>Thermococcales</taxon>
        <taxon>Thermococcaceae</taxon>
        <taxon>Pyrococcus</taxon>
    </lineage>
</organism>
<dbReference type="EC" id="2.7.1.78"/>
<dbReference type="EMBL" id="AJ248283">
    <property type="protein sequence ID" value="CAB49108.1"/>
    <property type="status" value="ALT_INIT"/>
    <property type="molecule type" value="Genomic_DNA"/>
</dbReference>
<dbReference type="EMBL" id="HE613800">
    <property type="protein sequence ID" value="CCE69560.1"/>
    <property type="molecule type" value="Genomic_DNA"/>
</dbReference>
<dbReference type="PIR" id="E75207">
    <property type="entry name" value="E75207"/>
</dbReference>
<dbReference type="RefSeq" id="WP_048146503.1">
    <property type="nucleotide sequence ID" value="NC_000868.1"/>
</dbReference>
<dbReference type="SMR" id="Q9V290"/>
<dbReference type="STRING" id="272844.PAB0124"/>
<dbReference type="KEGG" id="pab:PAB0124"/>
<dbReference type="PATRIC" id="fig|272844.11.peg.198"/>
<dbReference type="eggNOG" id="arCOG04127">
    <property type="taxonomic scope" value="Archaea"/>
</dbReference>
<dbReference type="HOGENOM" id="CLU_051301_0_1_2"/>
<dbReference type="OrthoDB" id="359472at2157"/>
<dbReference type="Proteomes" id="UP000000810">
    <property type="component" value="Chromosome"/>
</dbReference>
<dbReference type="Proteomes" id="UP000009139">
    <property type="component" value="Chromosome"/>
</dbReference>
<dbReference type="GO" id="GO:0005524">
    <property type="term" value="F:ATP binding"/>
    <property type="evidence" value="ECO:0007669"/>
    <property type="project" value="UniProtKB-KW"/>
</dbReference>
<dbReference type="GO" id="GO:0046404">
    <property type="term" value="F:ATP-dependent polydeoxyribonucleotide 5'-hydroxyl-kinase activity"/>
    <property type="evidence" value="ECO:0007669"/>
    <property type="project" value="RHEA"/>
</dbReference>
<dbReference type="GO" id="GO:0051736">
    <property type="term" value="F:ATP-dependent polyribonucleotide 5'-hydroxyl-kinase activity"/>
    <property type="evidence" value="ECO:0007669"/>
    <property type="project" value="RHEA"/>
</dbReference>
<dbReference type="GO" id="GO:0006396">
    <property type="term" value="P:RNA processing"/>
    <property type="evidence" value="ECO:0007669"/>
    <property type="project" value="InterPro"/>
</dbReference>
<dbReference type="Gene3D" id="3.40.50.300">
    <property type="entry name" value="P-loop containing nucleotide triphosphate hydrolases"/>
    <property type="match status" value="1"/>
</dbReference>
<dbReference type="InterPro" id="IPR045116">
    <property type="entry name" value="Clp1/Grc3"/>
</dbReference>
<dbReference type="InterPro" id="IPR032319">
    <property type="entry name" value="CLP1_P"/>
</dbReference>
<dbReference type="InterPro" id="IPR027417">
    <property type="entry name" value="P-loop_NTPase"/>
</dbReference>
<dbReference type="PANTHER" id="PTHR12755">
    <property type="entry name" value="CLEAVAGE/POLYADENYLATION FACTOR IA SUBUNIT CLP1P"/>
    <property type="match status" value="1"/>
</dbReference>
<dbReference type="PANTHER" id="PTHR12755:SF3">
    <property type="entry name" value="POLYNUCLEOTIDE 5'-HYDROXYL-KINASE NOL9"/>
    <property type="match status" value="1"/>
</dbReference>
<dbReference type="Pfam" id="PF16575">
    <property type="entry name" value="CLP1_P"/>
    <property type="match status" value="1"/>
</dbReference>
<dbReference type="SUPFAM" id="SSF52540">
    <property type="entry name" value="P-loop containing nucleoside triphosphate hydrolases"/>
    <property type="match status" value="1"/>
</dbReference>
<accession>Q9V290</accession>
<accession>G8ZG19</accession>